<sequence length="1282" mass="145807">MEAKDQKKHRKKNSGPKAAKKKKRLLQDLQLGDEEDARKRNPKAFAVQSAVRMARSFHRTQDLKTKKHHIPVVDRTPLEPPPIVVVVMGPPKVGKSTLIQCLIRNFTRQKLTEIRGPVTIVSGKKRRLTIIECGCDINMMIDLAKVADLVLMLIDASFGFEMETFEFLNICQVHGFPKIMGVLTHLDSFKHNKQLKKTKKRLKHRFWTEVYPGAKLFYLSGMVHGEYQNQEIHNLGRFITVMKFRPLTWQTSHPYILADRMEDLTNPEDIRTNIKCDRKVSLYGYLRGAHLKNKSQIHMPGVGDFAVSDISFLPDPCALPEQQKKRCLNEKEKLVYAPLSGVGGVLYDKDAVYVDLGGSHVFQDEVGPTHELVQSLISTHSTIDAKMASSRVTLFSDSKPLGSEDIDNQGLMMPKEEKQMDLNTGRMRRKAIFGDEDESGDSDDEEDDEMSEDDGLENGSSDEEAEEEENAEMTDQYMAVKGIKRRKLELEEDSEMDLPAFADSDDDLERSSAEEGEAEEADESSEEEDCTAGEKGISGSKAAGEGSKAGLSPANCQSDRVNLEKSLLMKKAALPTFDSGHCTAEEVFASEDESEESSSLSAEEEDSENEEAIRKKLSKPSQVSSGQKLGPQNFIDETSDIENLLKEEEDYKEENNDSKETSGALKWKEDLSRKAAEAFLRQQQAAPNLRKLIYGTVTEDNEEEDDDTLEELGGLFRVNQPDRECKHKADSLDCSRFLVEAPHDWDLEEVMNSIRDCFVTGKWEDDKDAAKVLAEDEELYGDFEDLETGDVHKGKSGPNTQNEDIEKEVKEEIDPDEEESAKKKHLDKKRKLKEMFDAEYDEGESTYFDDLKGEMQKQAQLNRAEFEDQDDEARVQYEGFRPGMYVRIEIENVPCEFVQNFDPHYPIILGGLGNSEGNVGYVQMRLKKHRWYKKILKSRDPIIFSVGWRRFQTIPLYYIEDHNGRQRLLKYTPQHMHCGAAFWGPITPQGTGFLAIQSVSGIMPDFRIAATGVVLDLDKSIKIVKKLKLTGFPYKIFKNTSFIKGMFNSALEVAKFEGAVIRTVSGIRGQIKKALRAPEGAFRASFEDKLLMSDIVFMRTWYPVSIPAFYNPVTSLLKPVGEKDTWSGMRTTGQLRLAHGVRLKANKDSLYKPILRQKKHFNSLHIPKALQKALPFKNKPKTQAKAGKVPKDRRRPAVIREPHERKILALLDALSTVHSQKMKKAKEQRHLHNKEHFRAKQKEEEEKLKRQKDLRKKLFRIQGQKERRNQKSSLKGAEGQLQ</sequence>
<feature type="chain" id="PRO_0000195004" description="Ribosome biogenesis protein BMS1 homolog">
    <location>
        <begin position="1"/>
        <end position="1282"/>
    </location>
</feature>
<feature type="domain" description="Bms1-type G" evidence="3">
    <location>
        <begin position="80"/>
        <end position="245"/>
    </location>
</feature>
<feature type="region of interest" description="Disordered" evidence="4">
    <location>
        <begin position="1"/>
        <end position="43"/>
    </location>
</feature>
<feature type="region of interest" description="G1" evidence="3">
    <location>
        <begin position="89"/>
        <end position="96"/>
    </location>
</feature>
<feature type="region of interest" description="G2" evidence="3">
    <location>
        <begin position="117"/>
        <end position="121"/>
    </location>
</feature>
<feature type="region of interest" description="G3" evidence="3">
    <location>
        <begin position="132"/>
        <end position="135"/>
    </location>
</feature>
<feature type="region of interest" description="G4" evidence="3">
    <location>
        <begin position="184"/>
        <end position="187"/>
    </location>
</feature>
<feature type="region of interest" description="G5" evidence="3">
    <location>
        <begin position="219"/>
        <end position="228"/>
    </location>
</feature>
<feature type="region of interest" description="Disordered" evidence="4">
    <location>
        <begin position="397"/>
        <end position="557"/>
    </location>
</feature>
<feature type="region of interest" description="Disordered" evidence="4">
    <location>
        <begin position="575"/>
        <end position="667"/>
    </location>
</feature>
<feature type="region of interest" description="Disordered" evidence="4">
    <location>
        <begin position="787"/>
        <end position="822"/>
    </location>
</feature>
<feature type="region of interest" description="Disordered" evidence="4">
    <location>
        <begin position="1178"/>
        <end position="1202"/>
    </location>
</feature>
<feature type="region of interest" description="Disordered" evidence="4">
    <location>
        <begin position="1219"/>
        <end position="1282"/>
    </location>
</feature>
<feature type="compositionally biased region" description="Basic residues" evidence="4">
    <location>
        <begin position="1"/>
        <end position="24"/>
    </location>
</feature>
<feature type="compositionally biased region" description="Acidic residues" evidence="4">
    <location>
        <begin position="434"/>
        <end position="472"/>
    </location>
</feature>
<feature type="compositionally biased region" description="Acidic residues" evidence="4">
    <location>
        <begin position="503"/>
        <end position="531"/>
    </location>
</feature>
<feature type="compositionally biased region" description="Low complexity" evidence="4">
    <location>
        <begin position="535"/>
        <end position="550"/>
    </location>
</feature>
<feature type="compositionally biased region" description="Acidic residues" evidence="4">
    <location>
        <begin position="588"/>
        <end position="610"/>
    </location>
</feature>
<feature type="compositionally biased region" description="Basic and acidic residues" evidence="4">
    <location>
        <begin position="653"/>
        <end position="667"/>
    </location>
</feature>
<feature type="compositionally biased region" description="Basic and acidic residues" evidence="4">
    <location>
        <begin position="1228"/>
        <end position="1248"/>
    </location>
</feature>
<feature type="compositionally biased region" description="Basic residues" evidence="4">
    <location>
        <begin position="1249"/>
        <end position="1259"/>
    </location>
</feature>
<feature type="binding site" evidence="2">
    <location>
        <begin position="89"/>
        <end position="96"/>
    </location>
    <ligand>
        <name>ATP</name>
        <dbReference type="ChEBI" id="CHEBI:30616"/>
    </ligand>
</feature>
<feature type="modified residue" description="Phosphoserine" evidence="16">
    <location>
        <position position="188"/>
    </location>
</feature>
<feature type="modified residue" description="Phosphoserine" evidence="13 14 16">
    <location>
        <position position="552"/>
    </location>
</feature>
<feature type="modified residue" description="Phosphoserine" evidence="13">
    <location>
        <position position="625"/>
    </location>
</feature>
<feature type="modified residue" description="Phosphoserine" evidence="15">
    <location>
        <position position="639"/>
    </location>
</feature>
<feature type="modified residue" description="Phosphothreonine" evidence="13 14">
    <location>
        <position position="708"/>
    </location>
</feature>
<feature type="cross-link" description="Glycyl lysine isopeptide (Lys-Gly) (interchain with G-Cter in SUMO2)" evidence="20">
    <location>
        <position position="43"/>
    </location>
</feature>
<feature type="cross-link" description="Glycyl lysine isopeptide (Lys-Gly) (interchain with G-Cter in SUMO2)" evidence="20">
    <location>
        <position position="399"/>
    </location>
</feature>
<feature type="cross-link" description="Glycyl lysine isopeptide (Lys-Gly) (interchain with G-Cter in SUMO2)" evidence="18 20">
    <location>
        <position position="415"/>
    </location>
</feature>
<feature type="cross-link" description="Glycyl lysine isopeptide (Lys-Gly) (interchain with G-Cter in SUMO2)" evidence="20">
    <location>
        <position position="646"/>
    </location>
</feature>
<feature type="cross-link" description="Glycyl lysine isopeptide (Lys-Gly) (interchain with G-Cter in SUMO1); alternate" evidence="17">
    <location>
        <position position="810"/>
    </location>
</feature>
<feature type="cross-link" description="Glycyl lysine isopeptide (Lys-Gly) (interchain with G-Cter in SUMO2); alternate" evidence="17 18 19 20">
    <location>
        <position position="810"/>
    </location>
</feature>
<feature type="cross-link" description="Glycyl lysine isopeptide (Lys-Gly) (interchain with G-Cter in SUMO2)" evidence="20">
    <location>
        <position position="1206"/>
    </location>
</feature>
<feature type="sequence variant" id="VAR_057503" description="In dbSNP:rs2272881.">
    <original>R</original>
    <variation>H</variation>
    <location>
        <position position="237"/>
    </location>
</feature>
<feature type="sequence variant" id="VAR_057504" description="In dbSNP:rs3814621.">
    <original>S</original>
    <variation>P</variation>
    <location>
        <position position="552"/>
    </location>
</feature>
<feature type="sequence variant" id="VAR_057505" description="In dbSNP:rs787795.">
    <original>K</original>
    <variation>R</variation>
    <location>
        <position position="652"/>
    </location>
</feature>
<feature type="sequence variant" id="VAR_057506" description="In dbSNP:rs2419109.">
    <original>M</original>
    <variation>V</variation>
    <location>
        <position position="884"/>
    </location>
</feature>
<feature type="sequence variant" id="VAR_072539" description="In ACC; fibroblasts show CDKN1A-mediated G1/S phase transition defect with a significantly reduced cell proliferation rate compared to controls; in vitro scratch assay reveal an increased cell migration rate; dbSNP:rs587777706." evidence="6">
    <original>R</original>
    <variation>H</variation>
    <location>
        <position position="930"/>
    </location>
</feature>
<feature type="sequence variant" id="VAR_057507" description="In dbSNP:rs12764004." evidence="5">
    <original>V</original>
    <variation>I</variation>
    <location>
        <position position="1141"/>
    </location>
</feature>
<proteinExistence type="evidence at protein level"/>
<protein>
    <recommendedName>
        <fullName>Ribosome biogenesis protein BMS1 homolog</fullName>
        <ecNumber evidence="1">3.6.5.-</ecNumber>
    </recommendedName>
    <alternativeName>
        <fullName>Ribosome assembly protein BMS1 homolog</fullName>
    </alternativeName>
</protein>
<comment type="function">
    <text evidence="1">GTPase required for the synthesis of 40S ribosomal subunits and for processing of pre-ribosomal RNA (pre-rRNA) at sites A0, A1, and A2. Controls access of pre-rRNA intermediates to RCL1 during ribosome biogenesis by binding RCL1 in a GTP-dependent manner, and delivering it to pre-ribosomes. GTP-binding and/or GTP hydrolysis may induce conformational rearrangements within the BMS1-RCL1 complex allowing the interaction of RCL1 with its RNA substrate. Required for RCL1 import into the nucleus.</text>
</comment>
<comment type="catalytic activity">
    <reaction evidence="1">
        <text>GTP + H2O = GDP + phosphate + H(+)</text>
        <dbReference type="Rhea" id="RHEA:19669"/>
        <dbReference type="ChEBI" id="CHEBI:15377"/>
        <dbReference type="ChEBI" id="CHEBI:15378"/>
        <dbReference type="ChEBI" id="CHEBI:37565"/>
        <dbReference type="ChEBI" id="CHEBI:43474"/>
        <dbReference type="ChEBI" id="CHEBI:58189"/>
    </reaction>
    <physiologicalReaction direction="left-to-right" evidence="1">
        <dbReference type="Rhea" id="RHEA:19670"/>
    </physiologicalReaction>
</comment>
<comment type="subunit">
    <text evidence="7 8">Part of the small subunit (SSU) processome, composed of more than 70 proteins and the RNA chaperone small nucleolar RNA (snoRNA) U3 (PubMed:34516797). Interacts with RCL1 (PubMed:27474224).</text>
</comment>
<comment type="interaction">
    <interactant intactId="EBI-2513630">
        <id>Q14692</id>
    </interactant>
    <interactant intactId="EBI-11026509">
        <id>Q9Y2P8</id>
        <label>RCL1</label>
    </interactant>
    <organismsDiffer>false</organismsDiffer>
    <experiments>3</experiments>
</comment>
<comment type="subcellular location">
    <subcellularLocation>
        <location evidence="7 8">Nucleus</location>
        <location evidence="7 8">Nucleolus</location>
    </subcellularLocation>
</comment>
<comment type="disease" evidence="6">
    <disease id="DI-04202">
        <name>Aplasia cutis congenita, non-syndromic</name>
        <acronym>ACC</acronym>
        <description>A disorder characterized by congenital absence of a portion of skin in a localized or widespread area of the body. The lesions are most commonly localized on the scalp, however aplasia cutis congenita can affect any part of the body.</description>
        <dbReference type="MIM" id="107600"/>
    </disease>
    <text>The disease is caused by variants affecting the gene represented in this entry.</text>
</comment>
<comment type="similarity">
    <text evidence="9">Belongs to the TRAFAC class translation factor GTPase superfamily. Bms1-like GTPase family. BMS1 subfamily.</text>
</comment>
<comment type="sequence caution" evidence="9">
    <conflict type="erroneous initiation">
        <sequence resource="EMBL-CDS" id="BAA11504"/>
    </conflict>
    <text>Extended N-terminus.</text>
</comment>
<organism>
    <name type="scientific">Homo sapiens</name>
    <name type="common">Human</name>
    <dbReference type="NCBI Taxonomy" id="9606"/>
    <lineage>
        <taxon>Eukaryota</taxon>
        <taxon>Metazoa</taxon>
        <taxon>Chordata</taxon>
        <taxon>Craniata</taxon>
        <taxon>Vertebrata</taxon>
        <taxon>Euteleostomi</taxon>
        <taxon>Mammalia</taxon>
        <taxon>Eutheria</taxon>
        <taxon>Euarchontoglires</taxon>
        <taxon>Primates</taxon>
        <taxon>Haplorrhini</taxon>
        <taxon>Catarrhini</taxon>
        <taxon>Hominidae</taxon>
        <taxon>Homo</taxon>
    </lineage>
</organism>
<reference key="1">
    <citation type="journal article" date="1996" name="DNA Res.">
        <title>Prediction of the coding sequences of unidentified human genes. V. The coding sequences of 40 new genes (KIAA0161-KIAA0200) deduced by analysis of cDNA clones from human cell line KG-1.</title>
        <authorList>
            <person name="Nagase T."/>
            <person name="Seki N."/>
            <person name="Ishikawa K."/>
            <person name="Tanaka A."/>
            <person name="Nomura N."/>
        </authorList>
    </citation>
    <scope>NUCLEOTIDE SEQUENCE [LARGE SCALE MRNA]</scope>
    <source>
        <tissue>Bone marrow</tissue>
    </source>
</reference>
<reference key="2">
    <citation type="journal article" date="2004" name="Nature">
        <title>The DNA sequence and comparative analysis of human chromosome 10.</title>
        <authorList>
            <person name="Deloukas P."/>
            <person name="Earthrowl M.E."/>
            <person name="Grafham D.V."/>
            <person name="Rubenfield M."/>
            <person name="French L."/>
            <person name="Steward C.A."/>
            <person name="Sims S.K."/>
            <person name="Jones M.C."/>
            <person name="Searle S."/>
            <person name="Scott C."/>
            <person name="Howe K."/>
            <person name="Hunt S.E."/>
            <person name="Andrews T.D."/>
            <person name="Gilbert J.G.R."/>
            <person name="Swarbreck D."/>
            <person name="Ashurst J.L."/>
            <person name="Taylor A."/>
            <person name="Battles J."/>
            <person name="Bird C.P."/>
            <person name="Ainscough R."/>
            <person name="Almeida J.P."/>
            <person name="Ashwell R.I.S."/>
            <person name="Ambrose K.D."/>
            <person name="Babbage A.K."/>
            <person name="Bagguley C.L."/>
            <person name="Bailey J."/>
            <person name="Banerjee R."/>
            <person name="Bates K."/>
            <person name="Beasley H."/>
            <person name="Bray-Allen S."/>
            <person name="Brown A.J."/>
            <person name="Brown J.Y."/>
            <person name="Burford D.C."/>
            <person name="Burrill W."/>
            <person name="Burton J."/>
            <person name="Cahill P."/>
            <person name="Camire D."/>
            <person name="Carter N.P."/>
            <person name="Chapman J.C."/>
            <person name="Clark S.Y."/>
            <person name="Clarke G."/>
            <person name="Clee C.M."/>
            <person name="Clegg S."/>
            <person name="Corby N."/>
            <person name="Coulson A."/>
            <person name="Dhami P."/>
            <person name="Dutta I."/>
            <person name="Dunn M."/>
            <person name="Faulkner L."/>
            <person name="Frankish A."/>
            <person name="Frankland J.A."/>
            <person name="Garner P."/>
            <person name="Garnett J."/>
            <person name="Gribble S."/>
            <person name="Griffiths C."/>
            <person name="Grocock R."/>
            <person name="Gustafson E."/>
            <person name="Hammond S."/>
            <person name="Harley J.L."/>
            <person name="Hart E."/>
            <person name="Heath P.D."/>
            <person name="Ho T.P."/>
            <person name="Hopkins B."/>
            <person name="Horne J."/>
            <person name="Howden P.J."/>
            <person name="Huckle E."/>
            <person name="Hynds C."/>
            <person name="Johnson C."/>
            <person name="Johnson D."/>
            <person name="Kana A."/>
            <person name="Kay M."/>
            <person name="Kimberley A.M."/>
            <person name="Kershaw J.K."/>
            <person name="Kokkinaki M."/>
            <person name="Laird G.K."/>
            <person name="Lawlor S."/>
            <person name="Lee H.M."/>
            <person name="Leongamornlert D.A."/>
            <person name="Laird G."/>
            <person name="Lloyd C."/>
            <person name="Lloyd D.M."/>
            <person name="Loveland J."/>
            <person name="Lovell J."/>
            <person name="McLaren S."/>
            <person name="McLay K.E."/>
            <person name="McMurray A."/>
            <person name="Mashreghi-Mohammadi M."/>
            <person name="Matthews L."/>
            <person name="Milne S."/>
            <person name="Nickerson T."/>
            <person name="Nguyen M."/>
            <person name="Overton-Larty E."/>
            <person name="Palmer S.A."/>
            <person name="Pearce A.V."/>
            <person name="Peck A.I."/>
            <person name="Pelan S."/>
            <person name="Phillimore B."/>
            <person name="Porter K."/>
            <person name="Rice C.M."/>
            <person name="Rogosin A."/>
            <person name="Ross M.T."/>
            <person name="Sarafidou T."/>
            <person name="Sehra H.K."/>
            <person name="Shownkeen R."/>
            <person name="Skuce C.D."/>
            <person name="Smith M."/>
            <person name="Standring L."/>
            <person name="Sycamore N."/>
            <person name="Tester J."/>
            <person name="Thorpe A."/>
            <person name="Torcasso W."/>
            <person name="Tracey A."/>
            <person name="Tromans A."/>
            <person name="Tsolas J."/>
            <person name="Wall M."/>
            <person name="Walsh J."/>
            <person name="Wang H."/>
            <person name="Weinstock K."/>
            <person name="West A.P."/>
            <person name="Willey D.L."/>
            <person name="Whitehead S.L."/>
            <person name="Wilming L."/>
            <person name="Wray P.W."/>
            <person name="Young L."/>
            <person name="Chen Y."/>
            <person name="Lovering R.C."/>
            <person name="Moschonas N.K."/>
            <person name="Siebert R."/>
            <person name="Fechtel K."/>
            <person name="Bentley D."/>
            <person name="Durbin R.M."/>
            <person name="Hubbard T."/>
            <person name="Doucette-Stamm L."/>
            <person name="Beck S."/>
            <person name="Smith D.R."/>
            <person name="Rogers J."/>
        </authorList>
    </citation>
    <scope>NUCLEOTIDE SEQUENCE [LARGE SCALE GENOMIC DNA]</scope>
</reference>
<reference key="3">
    <citation type="submission" date="2005-07" db="EMBL/GenBank/DDBJ databases">
        <authorList>
            <person name="Mural R.J."/>
            <person name="Istrail S."/>
            <person name="Sutton G."/>
            <person name="Florea L."/>
            <person name="Halpern A.L."/>
            <person name="Mobarry C.M."/>
            <person name="Lippert R."/>
            <person name="Walenz B."/>
            <person name="Shatkay H."/>
            <person name="Dew I."/>
            <person name="Miller J.R."/>
            <person name="Flanigan M.J."/>
            <person name="Edwards N.J."/>
            <person name="Bolanos R."/>
            <person name="Fasulo D."/>
            <person name="Halldorsson B.V."/>
            <person name="Hannenhalli S."/>
            <person name="Turner R."/>
            <person name="Yooseph S."/>
            <person name="Lu F."/>
            <person name="Nusskern D.R."/>
            <person name="Shue B.C."/>
            <person name="Zheng X.H."/>
            <person name="Zhong F."/>
            <person name="Delcher A.L."/>
            <person name="Huson D.H."/>
            <person name="Kravitz S.A."/>
            <person name="Mouchard L."/>
            <person name="Reinert K."/>
            <person name="Remington K.A."/>
            <person name="Clark A.G."/>
            <person name="Waterman M.S."/>
            <person name="Eichler E.E."/>
            <person name="Adams M.D."/>
            <person name="Hunkapiller M.W."/>
            <person name="Myers E.W."/>
            <person name="Venter J.C."/>
        </authorList>
    </citation>
    <scope>NUCLEOTIDE SEQUENCE [LARGE SCALE GENOMIC DNA]</scope>
</reference>
<reference key="4">
    <citation type="journal article" date="2004" name="Genome Res.">
        <title>The status, quality, and expansion of the NIH full-length cDNA project: the Mammalian Gene Collection (MGC).</title>
        <authorList>
            <consortium name="The MGC Project Team"/>
        </authorList>
    </citation>
    <scope>NUCLEOTIDE SEQUENCE [LARGE SCALE MRNA]</scope>
    <scope>VARIANT ILE-1141</scope>
    <source>
        <tissue>Skin</tissue>
    </source>
</reference>
<reference key="5">
    <citation type="journal article" date="2006" name="Cell">
        <title>Global, in vivo, and site-specific phosphorylation dynamics in signaling networks.</title>
        <authorList>
            <person name="Olsen J.V."/>
            <person name="Blagoev B."/>
            <person name="Gnad F."/>
            <person name="Macek B."/>
            <person name="Kumar C."/>
            <person name="Mortensen P."/>
            <person name="Mann M."/>
        </authorList>
    </citation>
    <scope>IDENTIFICATION BY MASS SPECTROMETRY [LARGE SCALE ANALYSIS]</scope>
    <source>
        <tissue>Cervix carcinoma</tissue>
    </source>
</reference>
<reference key="6">
    <citation type="journal article" date="2008" name="Proc. Natl. Acad. Sci. U.S.A.">
        <title>A quantitative atlas of mitotic phosphorylation.</title>
        <authorList>
            <person name="Dephoure N."/>
            <person name="Zhou C."/>
            <person name="Villen J."/>
            <person name="Beausoleil S.A."/>
            <person name="Bakalarski C.E."/>
            <person name="Elledge S.J."/>
            <person name="Gygi S.P."/>
        </authorList>
    </citation>
    <scope>PHOSPHORYLATION [LARGE SCALE ANALYSIS] AT SER-552; SER-625 AND THR-708</scope>
    <scope>IDENTIFICATION BY MASS SPECTROMETRY [LARGE SCALE ANALYSIS]</scope>
    <source>
        <tissue>Cervix carcinoma</tissue>
    </source>
</reference>
<reference key="7">
    <citation type="journal article" date="2009" name="Anal. Chem.">
        <title>Lys-N and trypsin cover complementary parts of the phosphoproteome in a refined SCX-based approach.</title>
        <authorList>
            <person name="Gauci S."/>
            <person name="Helbig A.O."/>
            <person name="Slijper M."/>
            <person name="Krijgsveld J."/>
            <person name="Heck A.J."/>
            <person name="Mohammed S."/>
        </authorList>
    </citation>
    <scope>IDENTIFICATION BY MASS SPECTROMETRY [LARGE SCALE ANALYSIS]</scope>
</reference>
<reference key="8">
    <citation type="journal article" date="2010" name="Sci. Signal.">
        <title>Quantitative phosphoproteomics reveals widespread full phosphorylation site occupancy during mitosis.</title>
        <authorList>
            <person name="Olsen J.V."/>
            <person name="Vermeulen M."/>
            <person name="Santamaria A."/>
            <person name="Kumar C."/>
            <person name="Miller M.L."/>
            <person name="Jensen L.J."/>
            <person name="Gnad F."/>
            <person name="Cox J."/>
            <person name="Jensen T.S."/>
            <person name="Nigg E.A."/>
            <person name="Brunak S."/>
            <person name="Mann M."/>
        </authorList>
    </citation>
    <scope>PHOSPHORYLATION [LARGE SCALE ANALYSIS] AT SER-552 AND THR-708</scope>
    <scope>IDENTIFICATION BY MASS SPECTROMETRY [LARGE SCALE ANALYSIS]</scope>
    <source>
        <tissue>Cervix carcinoma</tissue>
    </source>
</reference>
<reference key="9">
    <citation type="journal article" date="2011" name="BMC Syst. Biol.">
        <title>Initial characterization of the human central proteome.</title>
        <authorList>
            <person name="Burkard T.R."/>
            <person name="Planyavsky M."/>
            <person name="Kaupe I."/>
            <person name="Breitwieser F.P."/>
            <person name="Buerckstuemmer T."/>
            <person name="Bennett K.L."/>
            <person name="Superti-Furga G."/>
            <person name="Colinge J."/>
        </authorList>
    </citation>
    <scope>IDENTIFICATION BY MASS SPECTROMETRY [LARGE SCALE ANALYSIS]</scope>
</reference>
<reference key="10">
    <citation type="journal article" date="2011" name="Sci. Signal.">
        <title>System-wide temporal characterization of the proteome and phosphoproteome of human embryonic stem cell differentiation.</title>
        <authorList>
            <person name="Rigbolt K.T."/>
            <person name="Prokhorova T.A."/>
            <person name="Akimov V."/>
            <person name="Henningsen J."/>
            <person name="Johansen P.T."/>
            <person name="Kratchmarova I."/>
            <person name="Kassem M."/>
            <person name="Mann M."/>
            <person name="Olsen J.V."/>
            <person name="Blagoev B."/>
        </authorList>
    </citation>
    <scope>PHOSPHORYLATION [LARGE SCALE ANALYSIS] AT SER-639</scope>
    <scope>IDENTIFICATION BY MASS SPECTROMETRY [LARGE SCALE ANALYSIS]</scope>
</reference>
<reference key="11">
    <citation type="journal article" date="2013" name="J. Proteome Res.">
        <title>Toward a comprehensive characterization of a human cancer cell phosphoproteome.</title>
        <authorList>
            <person name="Zhou H."/>
            <person name="Di Palma S."/>
            <person name="Preisinger C."/>
            <person name="Peng M."/>
            <person name="Polat A.N."/>
            <person name="Heck A.J."/>
            <person name="Mohammed S."/>
        </authorList>
    </citation>
    <scope>PHOSPHORYLATION [LARGE SCALE ANALYSIS] AT SER-188 AND SER-552</scope>
    <scope>IDENTIFICATION BY MASS SPECTROMETRY [LARGE SCALE ANALYSIS]</scope>
    <source>
        <tissue>Cervix carcinoma</tissue>
        <tissue>Erythroleukemia</tissue>
    </source>
</reference>
<reference key="12">
    <citation type="journal article" date="2013" name="PLoS Genet.">
        <title>BMS1 is mutated in aplasia cutis congenita.</title>
        <authorList>
            <person name="Marneros A.G."/>
        </authorList>
    </citation>
    <scope>INVOLVEMENT IN ACC</scope>
    <scope>VARIANT ACC HIS-930</scope>
</reference>
<reference key="13">
    <citation type="journal article" date="2014" name="J. Proteomics">
        <title>An enzyme assisted RP-RPLC approach for in-depth analysis of human liver phosphoproteome.</title>
        <authorList>
            <person name="Bian Y."/>
            <person name="Song C."/>
            <person name="Cheng K."/>
            <person name="Dong M."/>
            <person name="Wang F."/>
            <person name="Huang J."/>
            <person name="Sun D."/>
            <person name="Wang L."/>
            <person name="Ye M."/>
            <person name="Zou H."/>
        </authorList>
    </citation>
    <scope>IDENTIFICATION BY MASS SPECTROMETRY [LARGE SCALE ANALYSIS]</scope>
    <source>
        <tissue>Liver</tissue>
    </source>
</reference>
<reference key="14">
    <citation type="journal article" date="2014" name="Nat. Struct. Mol. Biol.">
        <title>Uncovering global SUMOylation signaling networks in a site-specific manner.</title>
        <authorList>
            <person name="Hendriks I.A."/>
            <person name="D'Souza R.C."/>
            <person name="Yang B."/>
            <person name="Verlaan-de Vries M."/>
            <person name="Mann M."/>
            <person name="Vertegaal A.C."/>
        </authorList>
    </citation>
    <scope>SUMOYLATION [LARGE SCALE ANALYSIS] AT LYS-415 AND LYS-810</scope>
    <scope>IDENTIFICATION BY MASS SPECTROMETRY [LARGE SCALE ANALYSIS]</scope>
</reference>
<reference key="15">
    <citation type="journal article" date="2014" name="Proc. Natl. Acad. Sci. U.S.A.">
        <title>Mapping of SUMO sites and analysis of SUMOylation changes induced by external stimuli.</title>
        <authorList>
            <person name="Impens F."/>
            <person name="Radoshevich L."/>
            <person name="Cossart P."/>
            <person name="Ribet D."/>
        </authorList>
    </citation>
    <scope>SUMOYLATION [LARGE SCALE ANALYSIS] AT LYS-810</scope>
    <scope>IDENTIFICATION BY MASS SPECTROMETRY [LARGE SCALE ANALYSIS]</scope>
</reference>
<reference key="16">
    <citation type="journal article" date="2015" name="Mol. Cell. Proteomics">
        <title>System-wide analysis of SUMOylation dynamics in response to replication stress reveals novel small ubiquitin-like modified target proteins and acceptor lysines relevant for genome stability.</title>
        <authorList>
            <person name="Xiao Z."/>
            <person name="Chang J.G."/>
            <person name="Hendriks I.A."/>
            <person name="Sigurdsson J.O."/>
            <person name="Olsen J.V."/>
            <person name="Vertegaal A.C."/>
        </authorList>
    </citation>
    <scope>SUMOYLATION [LARGE SCALE ANALYSIS] AT LYS-810</scope>
    <scope>IDENTIFICATION BY MASS SPECTROMETRY [LARGE SCALE ANALYSIS]</scope>
</reference>
<reference key="17">
    <citation type="journal article" date="2016" name="J. Genet. Genomics">
        <title>Interaction between Bms1 and Rcl1, two ribosome biogenesis factors, is evolutionally conserved in zebrafish and human.</title>
        <authorList>
            <person name="Wang Y."/>
            <person name="Zhu Q."/>
            <person name="Huang L."/>
            <person name="Zhu Y."/>
            <person name="Chen J."/>
            <person name="Peng J."/>
            <person name="Lo L.J."/>
        </authorList>
    </citation>
    <scope>INTERACTION WITH RCL1</scope>
    <scope>SUBCELLULAR LOCATION</scope>
</reference>
<reference key="18">
    <citation type="journal article" date="2017" name="Nat. Struct. Mol. Biol.">
        <title>Site-specific mapping of the human SUMO proteome reveals co-modification with phosphorylation.</title>
        <authorList>
            <person name="Hendriks I.A."/>
            <person name="Lyon D."/>
            <person name="Young C."/>
            <person name="Jensen L.J."/>
            <person name="Vertegaal A.C."/>
            <person name="Nielsen M.L."/>
        </authorList>
    </citation>
    <scope>SUMOYLATION [LARGE SCALE ANALYSIS] AT LYS-43; LYS-399; LYS-415; LYS-646; LYS-810 AND LYS-1206</scope>
    <scope>IDENTIFICATION BY MASS SPECTROMETRY [LARGE SCALE ANALYSIS]</scope>
</reference>
<reference evidence="11 12" key="19">
    <citation type="journal article" date="2021" name="Science">
        <title>Nucleolar maturation of the human small subunit processome.</title>
        <authorList>
            <person name="Singh S."/>
            <person name="Vanden Broeck A."/>
            <person name="Miller L."/>
            <person name="Chaker-Margot M."/>
            <person name="Klinge S."/>
        </authorList>
    </citation>
    <scope>STRUCTURE BY ELECTRON MICROSCOPY (2.70 ANGSTROMS)</scope>
    <scope>SUBCELLULAR LOCATION</scope>
    <scope>SUBUNIT</scope>
</reference>
<gene>
    <name evidence="10" type="primary">BMS1</name>
    <name type="synonym">BMS1L</name>
    <name type="synonym">KIAA0187</name>
</gene>
<accession>Q14692</accession>
<accession>Q5QPT5</accession>
<accession>Q86XJ9</accession>
<name>BMS1_HUMAN</name>
<keyword id="KW-0002">3D-structure</keyword>
<keyword id="KW-0067">ATP-binding</keyword>
<keyword id="KW-0225">Disease variant</keyword>
<keyword id="KW-0038">Ectodermal dysplasia</keyword>
<keyword id="KW-0342">GTP-binding</keyword>
<keyword id="KW-0378">Hydrolase</keyword>
<keyword id="KW-1017">Isopeptide bond</keyword>
<keyword id="KW-0547">Nucleotide-binding</keyword>
<keyword id="KW-0539">Nucleus</keyword>
<keyword id="KW-0597">Phosphoprotein</keyword>
<keyword id="KW-1267">Proteomics identification</keyword>
<keyword id="KW-1185">Reference proteome</keyword>
<keyword id="KW-0690">Ribosome biogenesis</keyword>
<keyword id="KW-0832">Ubl conjugation</keyword>
<evidence type="ECO:0000250" key="1">
    <source>
        <dbReference type="UniProtKB" id="Q08965"/>
    </source>
</evidence>
<evidence type="ECO:0000255" key="2"/>
<evidence type="ECO:0000255" key="3">
    <source>
        <dbReference type="PROSITE-ProRule" id="PRU01051"/>
    </source>
</evidence>
<evidence type="ECO:0000256" key="4">
    <source>
        <dbReference type="SAM" id="MobiDB-lite"/>
    </source>
</evidence>
<evidence type="ECO:0000269" key="5">
    <source>
    </source>
</evidence>
<evidence type="ECO:0000269" key="6">
    <source>
    </source>
</evidence>
<evidence type="ECO:0000269" key="7">
    <source>
    </source>
</evidence>
<evidence type="ECO:0000269" key="8">
    <source>
    </source>
</evidence>
<evidence type="ECO:0000305" key="9"/>
<evidence type="ECO:0000312" key="10">
    <source>
        <dbReference type="HGNC" id="HGNC:23505"/>
    </source>
</evidence>
<evidence type="ECO:0007744" key="11">
    <source>
        <dbReference type="PDB" id="7MQ9"/>
    </source>
</evidence>
<evidence type="ECO:0007744" key="12">
    <source>
        <dbReference type="PDB" id="7MQA"/>
    </source>
</evidence>
<evidence type="ECO:0007744" key="13">
    <source>
    </source>
</evidence>
<evidence type="ECO:0007744" key="14">
    <source>
    </source>
</evidence>
<evidence type="ECO:0007744" key="15">
    <source>
    </source>
</evidence>
<evidence type="ECO:0007744" key="16">
    <source>
    </source>
</evidence>
<evidence type="ECO:0007744" key="17">
    <source>
    </source>
</evidence>
<evidence type="ECO:0007744" key="18">
    <source>
    </source>
</evidence>
<evidence type="ECO:0007744" key="19">
    <source>
    </source>
</evidence>
<evidence type="ECO:0007744" key="20">
    <source>
    </source>
</evidence>
<dbReference type="EC" id="3.6.5.-" evidence="1"/>
<dbReference type="EMBL" id="D80009">
    <property type="protein sequence ID" value="BAA11504.2"/>
    <property type="status" value="ALT_INIT"/>
    <property type="molecule type" value="mRNA"/>
</dbReference>
<dbReference type="EMBL" id="AL022344">
    <property type="status" value="NOT_ANNOTATED_CDS"/>
    <property type="molecule type" value="Genomic_DNA"/>
</dbReference>
<dbReference type="EMBL" id="CH471160">
    <property type="protein sequence ID" value="EAW86571.1"/>
    <property type="molecule type" value="Genomic_DNA"/>
</dbReference>
<dbReference type="EMBL" id="BC043345">
    <property type="protein sequence ID" value="AAH43345.1"/>
    <property type="molecule type" value="mRNA"/>
</dbReference>
<dbReference type="EMBL" id="BC150252">
    <property type="protein sequence ID" value="AAI50253.1"/>
    <property type="molecule type" value="mRNA"/>
</dbReference>
<dbReference type="CCDS" id="CCDS7199.1"/>
<dbReference type="RefSeq" id="NP_055568.3">
    <property type="nucleotide sequence ID" value="NM_014753.3"/>
</dbReference>
<dbReference type="RefSeq" id="XP_005271903.1">
    <property type="nucleotide sequence ID" value="XM_005271846.4"/>
</dbReference>
<dbReference type="RefSeq" id="XP_011538704.1">
    <property type="nucleotide sequence ID" value="XM_011540402.3"/>
</dbReference>
<dbReference type="PDB" id="7MQ9">
    <property type="method" value="EM"/>
    <property type="resolution" value="3.87 A"/>
    <property type="chains" value="SI=1-1282"/>
</dbReference>
<dbReference type="PDB" id="7MQA">
    <property type="method" value="EM"/>
    <property type="resolution" value="2.70 A"/>
    <property type="chains" value="SI=1-1282"/>
</dbReference>
<dbReference type="PDBsum" id="7MQ9"/>
<dbReference type="PDBsum" id="7MQA"/>
<dbReference type="EMDB" id="EMD-23937"/>
<dbReference type="EMDB" id="EMD-23938"/>
<dbReference type="SMR" id="Q14692"/>
<dbReference type="BioGRID" id="115134">
    <property type="interactions" value="256"/>
</dbReference>
<dbReference type="ComplexPortal" id="CPX-2511">
    <property type="entry name" value="Small ribosomal subunit processome"/>
</dbReference>
<dbReference type="FunCoup" id="Q14692">
    <property type="interactions" value="3883"/>
</dbReference>
<dbReference type="IntAct" id="Q14692">
    <property type="interactions" value="141"/>
</dbReference>
<dbReference type="MINT" id="Q14692"/>
<dbReference type="STRING" id="9606.ENSP00000363642"/>
<dbReference type="GlyGen" id="Q14692">
    <property type="glycosylation" value="2 sites, 1 O-linked glycan (1 site)"/>
</dbReference>
<dbReference type="iPTMnet" id="Q14692"/>
<dbReference type="PhosphoSitePlus" id="Q14692"/>
<dbReference type="SwissPalm" id="Q14692"/>
<dbReference type="BioMuta" id="BMS1"/>
<dbReference type="DMDM" id="27151474"/>
<dbReference type="jPOST" id="Q14692"/>
<dbReference type="MassIVE" id="Q14692"/>
<dbReference type="PaxDb" id="9606-ENSP00000363642"/>
<dbReference type="PeptideAtlas" id="Q14692"/>
<dbReference type="ProteomicsDB" id="60130"/>
<dbReference type="Pumba" id="Q14692"/>
<dbReference type="Antibodypedia" id="13377">
    <property type="antibodies" value="81 antibodies from 23 providers"/>
</dbReference>
<dbReference type="DNASU" id="9790"/>
<dbReference type="Ensembl" id="ENST00000374518.6">
    <property type="protein sequence ID" value="ENSP00000363642.4"/>
    <property type="gene ID" value="ENSG00000165733.8"/>
</dbReference>
<dbReference type="GeneID" id="9790"/>
<dbReference type="KEGG" id="hsa:9790"/>
<dbReference type="MANE-Select" id="ENST00000374518.6">
    <property type="protein sequence ID" value="ENSP00000363642.4"/>
    <property type="RefSeq nucleotide sequence ID" value="NM_014753.4"/>
    <property type="RefSeq protein sequence ID" value="NP_055568.3"/>
</dbReference>
<dbReference type="UCSC" id="uc001jaj.4">
    <property type="organism name" value="human"/>
</dbReference>
<dbReference type="AGR" id="HGNC:23505"/>
<dbReference type="CTD" id="9790"/>
<dbReference type="DisGeNET" id="9790"/>
<dbReference type="GeneCards" id="BMS1"/>
<dbReference type="HGNC" id="HGNC:23505">
    <property type="gene designation" value="BMS1"/>
</dbReference>
<dbReference type="HPA" id="ENSG00000165733">
    <property type="expression patterns" value="Low tissue specificity"/>
</dbReference>
<dbReference type="MalaCards" id="BMS1"/>
<dbReference type="MIM" id="107600">
    <property type="type" value="phenotype"/>
</dbReference>
<dbReference type="MIM" id="611448">
    <property type="type" value="gene"/>
</dbReference>
<dbReference type="neXtProt" id="NX_Q14692"/>
<dbReference type="OpenTargets" id="ENSG00000165733"/>
<dbReference type="Orphanet" id="1114">
    <property type="disease" value="Aplasia cutis congenita"/>
</dbReference>
<dbReference type="PharmGKB" id="PA162377556"/>
<dbReference type="VEuPathDB" id="HostDB:ENSG00000165733"/>
<dbReference type="eggNOG" id="KOG1951">
    <property type="taxonomic scope" value="Eukaryota"/>
</dbReference>
<dbReference type="GeneTree" id="ENSGT00940000153195"/>
<dbReference type="HOGENOM" id="CLU_002486_0_1_1"/>
<dbReference type="InParanoid" id="Q14692"/>
<dbReference type="OMA" id="KLHVPMV"/>
<dbReference type="OrthoDB" id="9534121at2759"/>
<dbReference type="PAN-GO" id="Q14692">
    <property type="GO annotations" value="6 GO annotations based on evolutionary models"/>
</dbReference>
<dbReference type="PhylomeDB" id="Q14692"/>
<dbReference type="TreeFam" id="TF105751"/>
<dbReference type="PathwayCommons" id="Q14692"/>
<dbReference type="Reactome" id="R-HSA-6790901">
    <property type="pathway name" value="rRNA modification in the nucleus and cytosol"/>
</dbReference>
<dbReference type="Reactome" id="R-HSA-6791226">
    <property type="pathway name" value="Major pathway of rRNA processing in the nucleolus and cytosol"/>
</dbReference>
<dbReference type="SignaLink" id="Q14692"/>
<dbReference type="BioGRID-ORCS" id="9790">
    <property type="hits" value="746 hits in 1165 CRISPR screens"/>
</dbReference>
<dbReference type="CD-CODE" id="232F8A39">
    <property type="entry name" value="P-body"/>
</dbReference>
<dbReference type="CD-CODE" id="91857CE7">
    <property type="entry name" value="Nucleolus"/>
</dbReference>
<dbReference type="ChiTaRS" id="BMS1">
    <property type="organism name" value="human"/>
</dbReference>
<dbReference type="GenomeRNAi" id="9790"/>
<dbReference type="Pharos" id="Q14692">
    <property type="development level" value="Tbio"/>
</dbReference>
<dbReference type="PRO" id="PR:Q14692"/>
<dbReference type="Proteomes" id="UP000005640">
    <property type="component" value="Chromosome 10"/>
</dbReference>
<dbReference type="RNAct" id="Q14692">
    <property type="molecule type" value="protein"/>
</dbReference>
<dbReference type="Bgee" id="ENSG00000165733">
    <property type="expression patterns" value="Expressed in tendon of biceps brachii and 215 other cell types or tissues"/>
</dbReference>
<dbReference type="GO" id="GO:0005694">
    <property type="term" value="C:chromosome"/>
    <property type="evidence" value="ECO:0000314"/>
    <property type="project" value="HPA"/>
</dbReference>
<dbReference type="GO" id="GO:0005730">
    <property type="term" value="C:nucleolus"/>
    <property type="evidence" value="ECO:0000314"/>
    <property type="project" value="HPA"/>
</dbReference>
<dbReference type="GO" id="GO:0005654">
    <property type="term" value="C:nucleoplasm"/>
    <property type="evidence" value="ECO:0000314"/>
    <property type="project" value="HPA"/>
</dbReference>
<dbReference type="GO" id="GO:0032040">
    <property type="term" value="C:small-subunit processome"/>
    <property type="evidence" value="ECO:0000314"/>
    <property type="project" value="UniProtKB"/>
</dbReference>
<dbReference type="GO" id="GO:0005524">
    <property type="term" value="F:ATP binding"/>
    <property type="evidence" value="ECO:0007669"/>
    <property type="project" value="UniProtKB-KW"/>
</dbReference>
<dbReference type="GO" id="GO:0005525">
    <property type="term" value="F:GTP binding"/>
    <property type="evidence" value="ECO:0000318"/>
    <property type="project" value="GO_Central"/>
</dbReference>
<dbReference type="GO" id="GO:0003924">
    <property type="term" value="F:GTPase activity"/>
    <property type="evidence" value="ECO:0000318"/>
    <property type="project" value="GO_Central"/>
</dbReference>
<dbReference type="GO" id="GO:0003723">
    <property type="term" value="F:RNA binding"/>
    <property type="evidence" value="ECO:0007005"/>
    <property type="project" value="UniProtKB"/>
</dbReference>
<dbReference type="GO" id="GO:0034511">
    <property type="term" value="F:U3 snoRNA binding"/>
    <property type="evidence" value="ECO:0000318"/>
    <property type="project" value="GO_Central"/>
</dbReference>
<dbReference type="GO" id="GO:0000479">
    <property type="term" value="P:endonucleolytic cleavage of tricistronic rRNA transcript (SSU-rRNA, 5.8S rRNA, LSU-rRNA)"/>
    <property type="evidence" value="ECO:0000318"/>
    <property type="project" value="GO_Central"/>
</dbReference>
<dbReference type="GO" id="GO:0000462">
    <property type="term" value="P:maturation of SSU-rRNA from tricistronic rRNA transcript (SSU-rRNA, 5.8S rRNA, LSU-rRNA)"/>
    <property type="evidence" value="ECO:0000318"/>
    <property type="project" value="GO_Central"/>
</dbReference>
<dbReference type="GO" id="GO:0042274">
    <property type="term" value="P:ribosomal small subunit biogenesis"/>
    <property type="evidence" value="ECO:0000314"/>
    <property type="project" value="UniProtKB"/>
</dbReference>
<dbReference type="CDD" id="cd01882">
    <property type="entry name" value="BMS1"/>
    <property type="match status" value="1"/>
</dbReference>
<dbReference type="FunFam" id="3.40.50.300:FF:000105">
    <property type="entry name" value="BMS1 ribosome biogenesis factor"/>
    <property type="match status" value="1"/>
</dbReference>
<dbReference type="Gene3D" id="3.40.50.300">
    <property type="entry name" value="P-loop containing nucleotide triphosphate hydrolases"/>
    <property type="match status" value="1"/>
</dbReference>
<dbReference type="InterPro" id="IPR012948">
    <property type="entry name" value="AARP2CN"/>
</dbReference>
<dbReference type="InterPro" id="IPR039761">
    <property type="entry name" value="Bms1/Tsr1"/>
</dbReference>
<dbReference type="InterPro" id="IPR037875">
    <property type="entry name" value="Bms1_N"/>
</dbReference>
<dbReference type="InterPro" id="IPR007034">
    <property type="entry name" value="BMS1_TSR1_C"/>
</dbReference>
<dbReference type="InterPro" id="IPR030387">
    <property type="entry name" value="G_Bms1/Tsr1_dom"/>
</dbReference>
<dbReference type="InterPro" id="IPR027417">
    <property type="entry name" value="P-loop_NTPase"/>
</dbReference>
<dbReference type="PANTHER" id="PTHR12858">
    <property type="entry name" value="RIBOSOME BIOGENESIS PROTEIN"/>
    <property type="match status" value="1"/>
</dbReference>
<dbReference type="PANTHER" id="PTHR12858:SF2">
    <property type="entry name" value="RIBOSOME BIOGENESIS PROTEIN BMS1 HOMOLOG"/>
    <property type="match status" value="1"/>
</dbReference>
<dbReference type="Pfam" id="PF08142">
    <property type="entry name" value="AARP2CN"/>
    <property type="match status" value="1"/>
</dbReference>
<dbReference type="Pfam" id="PF04950">
    <property type="entry name" value="RIBIOP_C"/>
    <property type="match status" value="1"/>
</dbReference>
<dbReference type="SMART" id="SM00785">
    <property type="entry name" value="AARP2CN"/>
    <property type="match status" value="1"/>
</dbReference>
<dbReference type="SMART" id="SM01362">
    <property type="entry name" value="DUF663"/>
    <property type="match status" value="1"/>
</dbReference>
<dbReference type="SUPFAM" id="SSF52540">
    <property type="entry name" value="P-loop containing nucleoside triphosphate hydrolases"/>
    <property type="match status" value="1"/>
</dbReference>
<dbReference type="PROSITE" id="PS51714">
    <property type="entry name" value="G_BMS1"/>
    <property type="match status" value="1"/>
</dbReference>